<proteinExistence type="inferred from homology"/>
<evidence type="ECO:0000255" key="1">
    <source>
        <dbReference type="HAMAP-Rule" id="MF_00215"/>
    </source>
</evidence>
<name>COAA_LIMRJ</name>
<organism>
    <name type="scientific">Limosilactobacillus reuteri subsp. reuteri (strain JCM 1112)</name>
    <name type="common">Lactobacillus reuteri</name>
    <dbReference type="NCBI Taxonomy" id="557433"/>
    <lineage>
        <taxon>Bacteria</taxon>
        <taxon>Bacillati</taxon>
        <taxon>Bacillota</taxon>
        <taxon>Bacilli</taxon>
        <taxon>Lactobacillales</taxon>
        <taxon>Lactobacillaceae</taxon>
        <taxon>Limosilactobacillus</taxon>
    </lineage>
</organism>
<feature type="chain" id="PRO_1000099936" description="Pantothenate kinase">
    <location>
        <begin position="1"/>
        <end position="307"/>
    </location>
</feature>
<feature type="binding site" evidence="1">
    <location>
        <begin position="90"/>
        <end position="97"/>
    </location>
    <ligand>
        <name>ATP</name>
        <dbReference type="ChEBI" id="CHEBI:30616"/>
    </ligand>
</feature>
<dbReference type="EC" id="2.7.1.33" evidence="1"/>
<dbReference type="EMBL" id="AP007281">
    <property type="protein sequence ID" value="BAG26028.1"/>
    <property type="molecule type" value="Genomic_DNA"/>
</dbReference>
<dbReference type="RefSeq" id="WP_003669003.1">
    <property type="nucleotide sequence ID" value="NC_010609.1"/>
</dbReference>
<dbReference type="SMR" id="B2G996"/>
<dbReference type="KEGG" id="lrf:LAR_1512"/>
<dbReference type="HOGENOM" id="CLU_053818_1_1_9"/>
<dbReference type="UniPathway" id="UPA00241">
    <property type="reaction ID" value="UER00352"/>
</dbReference>
<dbReference type="GO" id="GO:0005737">
    <property type="term" value="C:cytoplasm"/>
    <property type="evidence" value="ECO:0007669"/>
    <property type="project" value="UniProtKB-SubCell"/>
</dbReference>
<dbReference type="GO" id="GO:0005524">
    <property type="term" value="F:ATP binding"/>
    <property type="evidence" value="ECO:0007669"/>
    <property type="project" value="UniProtKB-UniRule"/>
</dbReference>
<dbReference type="GO" id="GO:0004594">
    <property type="term" value="F:pantothenate kinase activity"/>
    <property type="evidence" value="ECO:0007669"/>
    <property type="project" value="UniProtKB-UniRule"/>
</dbReference>
<dbReference type="GO" id="GO:0015937">
    <property type="term" value="P:coenzyme A biosynthetic process"/>
    <property type="evidence" value="ECO:0007669"/>
    <property type="project" value="UniProtKB-UniRule"/>
</dbReference>
<dbReference type="CDD" id="cd02025">
    <property type="entry name" value="PanK"/>
    <property type="match status" value="1"/>
</dbReference>
<dbReference type="Gene3D" id="3.40.50.300">
    <property type="entry name" value="P-loop containing nucleotide triphosphate hydrolases"/>
    <property type="match status" value="1"/>
</dbReference>
<dbReference type="HAMAP" id="MF_00215">
    <property type="entry name" value="Pantothen_kinase_1"/>
    <property type="match status" value="1"/>
</dbReference>
<dbReference type="InterPro" id="IPR027417">
    <property type="entry name" value="P-loop_NTPase"/>
</dbReference>
<dbReference type="InterPro" id="IPR004566">
    <property type="entry name" value="PanK"/>
</dbReference>
<dbReference type="InterPro" id="IPR006083">
    <property type="entry name" value="PRK/URK"/>
</dbReference>
<dbReference type="NCBIfam" id="TIGR00554">
    <property type="entry name" value="panK_bact"/>
    <property type="match status" value="1"/>
</dbReference>
<dbReference type="PANTHER" id="PTHR10285">
    <property type="entry name" value="URIDINE KINASE"/>
    <property type="match status" value="1"/>
</dbReference>
<dbReference type="Pfam" id="PF00485">
    <property type="entry name" value="PRK"/>
    <property type="match status" value="1"/>
</dbReference>
<dbReference type="PIRSF" id="PIRSF000545">
    <property type="entry name" value="Pantothenate_kin"/>
    <property type="match status" value="1"/>
</dbReference>
<dbReference type="SUPFAM" id="SSF52540">
    <property type="entry name" value="P-loop containing nucleoside triphosphate hydrolases"/>
    <property type="match status" value="1"/>
</dbReference>
<keyword id="KW-0067">ATP-binding</keyword>
<keyword id="KW-0173">Coenzyme A biosynthesis</keyword>
<keyword id="KW-0963">Cytoplasm</keyword>
<keyword id="KW-0418">Kinase</keyword>
<keyword id="KW-0547">Nucleotide-binding</keyword>
<keyword id="KW-0808">Transferase</keyword>
<comment type="catalytic activity">
    <reaction evidence="1">
        <text>(R)-pantothenate + ATP = (R)-4'-phosphopantothenate + ADP + H(+)</text>
        <dbReference type="Rhea" id="RHEA:16373"/>
        <dbReference type="ChEBI" id="CHEBI:10986"/>
        <dbReference type="ChEBI" id="CHEBI:15378"/>
        <dbReference type="ChEBI" id="CHEBI:29032"/>
        <dbReference type="ChEBI" id="CHEBI:30616"/>
        <dbReference type="ChEBI" id="CHEBI:456216"/>
        <dbReference type="EC" id="2.7.1.33"/>
    </reaction>
</comment>
<comment type="pathway">
    <text evidence="1">Cofactor biosynthesis; coenzyme A biosynthesis; CoA from (R)-pantothenate: step 1/5.</text>
</comment>
<comment type="subcellular location">
    <subcellularLocation>
        <location evidence="1">Cytoplasm</location>
    </subcellularLocation>
</comment>
<comment type="similarity">
    <text evidence="1">Belongs to the prokaryotic pantothenate kinase family.</text>
</comment>
<gene>
    <name evidence="1" type="primary">coaA</name>
    <name type="ordered locus">LAR_1512</name>
</gene>
<sequence>MDEWMNYEQFDRQTWHGFFPTDSVRLTQGNLDEIKSLNDRISIEDVQDVYLPLIKLIQLRYQNFLEWQMQKANFLQRSTMRIPYIIGIAGSVAVGKSTIARLISILLNKMLPDKRVELMTTDGFLYPNAELKRRGIMDRKGFPESYDMERLLKFLNDVKAGEPVVKAPTYSHQVYDVQLDKPLVIDSPDILIVEGINTLQLPSNQQLYVSDYFDWSLYVDADPDLIEHWYLQRFGMLLDTAFTDPSNYYYPYSKGDRQEAFKMAKYVWQRVDLPNLREFILPTKSRADVILHKTTGHVVDKLYLRRG</sequence>
<protein>
    <recommendedName>
        <fullName evidence="1">Pantothenate kinase</fullName>
        <ecNumber evidence="1">2.7.1.33</ecNumber>
    </recommendedName>
    <alternativeName>
        <fullName evidence="1">Pantothenic acid kinase</fullName>
    </alternativeName>
</protein>
<reference key="1">
    <citation type="journal article" date="2008" name="DNA Res.">
        <title>Comparative genome analysis of Lactobacillus reuteri and Lactobacillus fermentum reveal a genomic island for reuterin and cobalamin production.</title>
        <authorList>
            <person name="Morita H."/>
            <person name="Toh H."/>
            <person name="Fukuda S."/>
            <person name="Horikawa H."/>
            <person name="Oshima K."/>
            <person name="Suzuki T."/>
            <person name="Murakami M."/>
            <person name="Hisamatsu S."/>
            <person name="Kato Y."/>
            <person name="Takizawa T."/>
            <person name="Fukuoka H."/>
            <person name="Yoshimura T."/>
            <person name="Itoh K."/>
            <person name="O'Sullivan D.J."/>
            <person name="McKay L.L."/>
            <person name="Ohno H."/>
            <person name="Kikuchi J."/>
            <person name="Masaoka T."/>
            <person name="Hattori M."/>
        </authorList>
    </citation>
    <scope>NUCLEOTIDE SEQUENCE [LARGE SCALE GENOMIC DNA]</scope>
    <source>
        <strain>JCM 1112</strain>
    </source>
</reference>
<accession>B2G996</accession>